<gene>
    <name type="primary">COR413PM1</name>
    <name type="synonym">FL3-5A3</name>
    <name type="ordered locus">At2g15970</name>
    <name type="ORF">F19G14.3</name>
</gene>
<evidence type="ECO:0000255" key="1"/>
<evidence type="ECO:0000269" key="2">
    <source>
    </source>
</evidence>
<evidence type="ECO:0000269" key="3">
    <source>
    </source>
</evidence>
<evidence type="ECO:0000305" key="4"/>
<comment type="subcellular location">
    <subcellularLocation>
        <location evidence="1">Membrane</location>
        <topology evidence="1">Multi-pass membrane protein</topology>
    </subcellularLocation>
</comment>
<comment type="alternative products">
    <event type="alternative splicing"/>
    <isoform>
        <id>Q9XIM7-1</id>
        <name>1</name>
        <sequence type="displayed"/>
    </isoform>
    <text>Additional isoforms seem to exist.</text>
</comment>
<comment type="induction">
    <text evidence="2 3">Accumulates in response to abscisic acid (ABA), freezing and drought treatments.</text>
</comment>
<comment type="similarity">
    <text evidence="4">Belongs to the Cold-regulated 413 protein family.</text>
</comment>
<feature type="chain" id="PRO_0000420440" description="Cold-regulated 413 plasma membrane protein 1">
    <location>
        <begin position="1"/>
        <end position="197"/>
    </location>
</feature>
<feature type="topological domain" description="Extracellular" evidence="1">
    <location>
        <begin position="1"/>
        <end position="40"/>
    </location>
</feature>
<feature type="transmembrane region" description="Helical" evidence="1">
    <location>
        <begin position="41"/>
        <end position="61"/>
    </location>
</feature>
<feature type="topological domain" description="Cytoplasmic" evidence="1">
    <location>
        <begin position="62"/>
        <end position="71"/>
    </location>
</feature>
<feature type="transmembrane region" description="Helical" evidence="1">
    <location>
        <begin position="72"/>
        <end position="92"/>
    </location>
</feature>
<feature type="topological domain" description="Extracellular" evidence="1">
    <location>
        <begin position="93"/>
        <end position="94"/>
    </location>
</feature>
<feature type="transmembrane region" description="Helical" evidence="1">
    <location>
        <begin position="95"/>
        <end position="115"/>
    </location>
</feature>
<feature type="topological domain" description="Cytoplasmic" evidence="1">
    <location>
        <begin position="116"/>
        <end position="117"/>
    </location>
</feature>
<feature type="transmembrane region" description="Helical" evidence="1">
    <location>
        <begin position="118"/>
        <end position="138"/>
    </location>
</feature>
<feature type="topological domain" description="Extracellular" evidence="1">
    <location>
        <begin position="139"/>
        <end position="141"/>
    </location>
</feature>
<feature type="transmembrane region" description="Helical" evidence="1">
    <location>
        <begin position="142"/>
        <end position="162"/>
    </location>
</feature>
<feature type="topological domain" description="Cytoplasmic" evidence="1">
    <location>
        <begin position="163"/>
        <end position="176"/>
    </location>
</feature>
<feature type="transmembrane region" description="Helical" evidence="1">
    <location>
        <begin position="177"/>
        <end position="197"/>
    </location>
</feature>
<organism>
    <name type="scientific">Arabidopsis thaliana</name>
    <name type="common">Mouse-ear cress</name>
    <dbReference type="NCBI Taxonomy" id="3702"/>
    <lineage>
        <taxon>Eukaryota</taxon>
        <taxon>Viridiplantae</taxon>
        <taxon>Streptophyta</taxon>
        <taxon>Embryophyta</taxon>
        <taxon>Tracheophyta</taxon>
        <taxon>Spermatophyta</taxon>
        <taxon>Magnoliopsida</taxon>
        <taxon>eudicotyledons</taxon>
        <taxon>Gunneridae</taxon>
        <taxon>Pentapetalae</taxon>
        <taxon>rosids</taxon>
        <taxon>malvids</taxon>
        <taxon>Brassicales</taxon>
        <taxon>Brassicaceae</taxon>
        <taxon>Camelineae</taxon>
        <taxon>Arabidopsis</taxon>
    </lineage>
</organism>
<keyword id="KW-0025">Alternative splicing</keyword>
<keyword id="KW-0472">Membrane</keyword>
<keyword id="KW-1185">Reference proteome</keyword>
<keyword id="KW-0812">Transmembrane</keyword>
<keyword id="KW-1133">Transmembrane helix</keyword>
<accession>Q9XIM7</accession>
<reference key="1">
    <citation type="journal article" date="2003" name="Plant Physiol.">
        <title>Expression profiling and bioinformatic analyses of a novel stress-regulated multispanning transmembrane protein family from cereals and Arabidopsis.</title>
        <authorList>
            <person name="Breton G."/>
            <person name="Danyluk J."/>
            <person name="Charron J.-B.F."/>
            <person name="Sarhan F."/>
        </authorList>
    </citation>
    <scope>NUCLEOTIDE SEQUENCE [MRNA]</scope>
    <scope>INDUCTION BY ABSCISIC ACID; FREEZING AND DROUGHT</scope>
    <scope>GENE FAMILY</scope>
    <scope>NOMENCLATURE</scope>
    <source>
        <strain>cv. Columbia</strain>
    </source>
</reference>
<reference key="2">
    <citation type="journal article" date="1999" name="Nature">
        <title>Sequence and analysis of chromosome 2 of the plant Arabidopsis thaliana.</title>
        <authorList>
            <person name="Lin X."/>
            <person name="Kaul S."/>
            <person name="Rounsley S.D."/>
            <person name="Shea T.P."/>
            <person name="Benito M.-I."/>
            <person name="Town C.D."/>
            <person name="Fujii C.Y."/>
            <person name="Mason T.M."/>
            <person name="Bowman C.L."/>
            <person name="Barnstead M.E."/>
            <person name="Feldblyum T.V."/>
            <person name="Buell C.R."/>
            <person name="Ketchum K.A."/>
            <person name="Lee J.J."/>
            <person name="Ronning C.M."/>
            <person name="Koo H.L."/>
            <person name="Moffat K.S."/>
            <person name="Cronin L.A."/>
            <person name="Shen M."/>
            <person name="Pai G."/>
            <person name="Van Aken S."/>
            <person name="Umayam L."/>
            <person name="Tallon L.J."/>
            <person name="Gill J.E."/>
            <person name="Adams M.D."/>
            <person name="Carrera A.J."/>
            <person name="Creasy T.H."/>
            <person name="Goodman H.M."/>
            <person name="Somerville C.R."/>
            <person name="Copenhaver G.P."/>
            <person name="Preuss D."/>
            <person name="Nierman W.C."/>
            <person name="White O."/>
            <person name="Eisen J.A."/>
            <person name="Salzberg S.L."/>
            <person name="Fraser C.M."/>
            <person name="Venter J.C."/>
        </authorList>
    </citation>
    <scope>NUCLEOTIDE SEQUENCE [LARGE SCALE GENOMIC DNA]</scope>
    <source>
        <strain>cv. Columbia</strain>
    </source>
</reference>
<reference key="3">
    <citation type="journal article" date="2017" name="Plant J.">
        <title>Araport11: a complete reannotation of the Arabidopsis thaliana reference genome.</title>
        <authorList>
            <person name="Cheng C.Y."/>
            <person name="Krishnakumar V."/>
            <person name="Chan A.P."/>
            <person name="Thibaud-Nissen F."/>
            <person name="Schobel S."/>
            <person name="Town C.D."/>
        </authorList>
    </citation>
    <scope>GENOME REANNOTATION</scope>
    <source>
        <strain>cv. Columbia</strain>
    </source>
</reference>
<reference key="4">
    <citation type="journal article" date="2002" name="Science">
        <title>Functional annotation of a full-length Arabidopsis cDNA collection.</title>
        <authorList>
            <person name="Seki M."/>
            <person name="Narusaka M."/>
            <person name="Kamiya A."/>
            <person name="Ishida J."/>
            <person name="Satou M."/>
            <person name="Sakurai T."/>
            <person name="Nakajima M."/>
            <person name="Enju A."/>
            <person name="Akiyama K."/>
            <person name="Oono Y."/>
            <person name="Muramatsu M."/>
            <person name="Hayashizaki Y."/>
            <person name="Kawai J."/>
            <person name="Carninci P."/>
            <person name="Itoh M."/>
            <person name="Ishii Y."/>
            <person name="Arakawa T."/>
            <person name="Shibata K."/>
            <person name="Shinagawa A."/>
            <person name="Shinozaki K."/>
        </authorList>
    </citation>
    <scope>NUCLEOTIDE SEQUENCE [LARGE SCALE MRNA]</scope>
    <source>
        <strain>cv. Columbia</strain>
    </source>
</reference>
<reference key="5">
    <citation type="journal article" date="2003" name="Science">
        <title>Empirical analysis of transcriptional activity in the Arabidopsis genome.</title>
        <authorList>
            <person name="Yamada K."/>
            <person name="Lim J."/>
            <person name="Dale J.M."/>
            <person name="Chen H."/>
            <person name="Shinn P."/>
            <person name="Palm C.J."/>
            <person name="Southwick A.M."/>
            <person name="Wu H.C."/>
            <person name="Kim C.J."/>
            <person name="Nguyen M."/>
            <person name="Pham P.K."/>
            <person name="Cheuk R.F."/>
            <person name="Karlin-Newmann G."/>
            <person name="Liu S.X."/>
            <person name="Lam B."/>
            <person name="Sakano H."/>
            <person name="Wu T."/>
            <person name="Yu G."/>
            <person name="Miranda M."/>
            <person name="Quach H.L."/>
            <person name="Tripp M."/>
            <person name="Chang C.H."/>
            <person name="Lee J.M."/>
            <person name="Toriumi M.J."/>
            <person name="Chan M.M."/>
            <person name="Tang C.C."/>
            <person name="Onodera C.S."/>
            <person name="Deng J.M."/>
            <person name="Akiyama K."/>
            <person name="Ansari Y."/>
            <person name="Arakawa T."/>
            <person name="Banh J."/>
            <person name="Banno F."/>
            <person name="Bowser L."/>
            <person name="Brooks S.Y."/>
            <person name="Carninci P."/>
            <person name="Chao Q."/>
            <person name="Choy N."/>
            <person name="Enju A."/>
            <person name="Goldsmith A.D."/>
            <person name="Gurjal M."/>
            <person name="Hansen N.F."/>
            <person name="Hayashizaki Y."/>
            <person name="Johnson-Hopson C."/>
            <person name="Hsuan V.W."/>
            <person name="Iida K."/>
            <person name="Karnes M."/>
            <person name="Khan S."/>
            <person name="Koesema E."/>
            <person name="Ishida J."/>
            <person name="Jiang P.X."/>
            <person name="Jones T."/>
            <person name="Kawai J."/>
            <person name="Kamiya A."/>
            <person name="Meyers C."/>
            <person name="Nakajima M."/>
            <person name="Narusaka M."/>
            <person name="Seki M."/>
            <person name="Sakurai T."/>
            <person name="Satou M."/>
            <person name="Tamse R."/>
            <person name="Vaysberg M."/>
            <person name="Wallender E.K."/>
            <person name="Wong C."/>
            <person name="Yamamura Y."/>
            <person name="Yuan S."/>
            <person name="Shinozaki K."/>
            <person name="Davis R.W."/>
            <person name="Theologis A."/>
            <person name="Ecker J.R."/>
        </authorList>
    </citation>
    <scope>NUCLEOTIDE SEQUENCE [LARGE SCALE MRNA]</scope>
    <source>
        <strain>cv. Columbia</strain>
    </source>
</reference>
<reference key="6">
    <citation type="submission" date="2002-03" db="EMBL/GenBank/DDBJ databases">
        <title>Full-length cDNA from Arabidopsis thaliana.</title>
        <authorList>
            <person name="Brover V.V."/>
            <person name="Troukhan M.E."/>
            <person name="Alexandrov N.A."/>
            <person name="Lu Y.-P."/>
            <person name="Flavell R.B."/>
            <person name="Feldmann K.A."/>
        </authorList>
    </citation>
    <scope>NUCLEOTIDE SEQUENCE [LARGE SCALE MRNA]</scope>
</reference>
<reference key="7">
    <citation type="journal article" date="2005" name="Plant Cell">
        <title>Leucine-rich repeat receptor-like kinase1 is a key membrane-bound regulator of abscisic acid early signaling in Arabidopsis.</title>
        <authorList>
            <person name="Osakabe Y."/>
            <person name="Maruyama K."/>
            <person name="Seki M."/>
            <person name="Satou M."/>
            <person name="Shinozaki K."/>
            <person name="Yamaguchi-Shinozaki K."/>
        </authorList>
    </citation>
    <scope>INDUCTION BY ABSCISIC ACID</scope>
</reference>
<dbReference type="EMBL" id="AF283004">
    <property type="protein sequence ID" value="AAG13393.1"/>
    <property type="molecule type" value="mRNA"/>
</dbReference>
<dbReference type="EMBL" id="AC006438">
    <property type="protein sequence ID" value="AAD41971.1"/>
    <property type="molecule type" value="Genomic_DNA"/>
</dbReference>
<dbReference type="EMBL" id="CP002685">
    <property type="protein sequence ID" value="AEC06451.1"/>
    <property type="molecule type" value="Genomic_DNA"/>
</dbReference>
<dbReference type="EMBL" id="AB044404">
    <property type="protein sequence ID" value="BAB17682.1"/>
    <property type="molecule type" value="mRNA"/>
</dbReference>
<dbReference type="EMBL" id="AY093767">
    <property type="protein sequence ID" value="AAM10389.1"/>
    <property type="molecule type" value="mRNA"/>
</dbReference>
<dbReference type="EMBL" id="AY143813">
    <property type="protein sequence ID" value="AAN28752.1"/>
    <property type="molecule type" value="mRNA"/>
</dbReference>
<dbReference type="EMBL" id="AY088558">
    <property type="protein sequence ID" value="AAM66090.1"/>
    <property type="molecule type" value="mRNA"/>
</dbReference>
<dbReference type="PIR" id="C84535">
    <property type="entry name" value="C84535"/>
</dbReference>
<dbReference type="RefSeq" id="NP_179196.1">
    <molecule id="Q9XIM7-1"/>
    <property type="nucleotide sequence ID" value="NM_127156.4"/>
</dbReference>
<dbReference type="BioGRID" id="1451">
    <property type="interactions" value="27"/>
</dbReference>
<dbReference type="FunCoup" id="Q9XIM7">
    <property type="interactions" value="40"/>
</dbReference>
<dbReference type="IntAct" id="Q9XIM7">
    <property type="interactions" value="23"/>
</dbReference>
<dbReference type="STRING" id="3702.Q9XIM7"/>
<dbReference type="PaxDb" id="3702-AT2G15970.1"/>
<dbReference type="ProteomicsDB" id="224415">
    <molecule id="Q9XIM7-1"/>
</dbReference>
<dbReference type="EnsemblPlants" id="AT2G15970.1">
    <molecule id="Q9XIM7-1"/>
    <property type="protein sequence ID" value="AT2G15970.1"/>
    <property type="gene ID" value="AT2G15970"/>
</dbReference>
<dbReference type="GeneID" id="816092"/>
<dbReference type="Gramene" id="AT2G15970.1">
    <molecule id="Q9XIM7-1"/>
    <property type="protein sequence ID" value="AT2G15970.1"/>
    <property type="gene ID" value="AT2G15970"/>
</dbReference>
<dbReference type="KEGG" id="ath:AT2G15970"/>
<dbReference type="Araport" id="AT2G15970"/>
<dbReference type="TAIR" id="AT2G15970">
    <property type="gene designation" value="COR413-PM1"/>
</dbReference>
<dbReference type="eggNOG" id="ENOG502QQY4">
    <property type="taxonomic scope" value="Eukaryota"/>
</dbReference>
<dbReference type="HOGENOM" id="CLU_081976_1_0_1"/>
<dbReference type="InParanoid" id="Q9XIM7"/>
<dbReference type="OMA" id="GQIGQWI"/>
<dbReference type="OrthoDB" id="1887731at2759"/>
<dbReference type="PhylomeDB" id="Q9XIM7"/>
<dbReference type="PRO" id="PR:Q9XIM7"/>
<dbReference type="Proteomes" id="UP000006548">
    <property type="component" value="Chromosome 2"/>
</dbReference>
<dbReference type="ExpressionAtlas" id="Q9XIM7">
    <property type="expression patterns" value="baseline and differential"/>
</dbReference>
<dbReference type="GO" id="GO:0000325">
    <property type="term" value="C:plant-type vacuole"/>
    <property type="evidence" value="ECO:0007005"/>
    <property type="project" value="TAIR"/>
</dbReference>
<dbReference type="GO" id="GO:0005886">
    <property type="term" value="C:plasma membrane"/>
    <property type="evidence" value="ECO:0000250"/>
    <property type="project" value="TAIR"/>
</dbReference>
<dbReference type="GO" id="GO:0042631">
    <property type="term" value="P:cellular response to water deprivation"/>
    <property type="evidence" value="ECO:0000270"/>
    <property type="project" value="TAIR"/>
</dbReference>
<dbReference type="GO" id="GO:0009631">
    <property type="term" value="P:cold acclimation"/>
    <property type="evidence" value="ECO:0000270"/>
    <property type="project" value="TAIR"/>
</dbReference>
<dbReference type="GO" id="GO:0009737">
    <property type="term" value="P:response to abscisic acid"/>
    <property type="evidence" value="ECO:0000270"/>
    <property type="project" value="TAIR"/>
</dbReference>
<dbReference type="InterPro" id="IPR008892">
    <property type="entry name" value="COR413"/>
</dbReference>
<dbReference type="PANTHER" id="PTHR33596:SF1">
    <property type="entry name" value="COLD-REGULATED 413 PLASMA MEMBRANE PROTEIN 1-RELATED"/>
    <property type="match status" value="1"/>
</dbReference>
<dbReference type="PANTHER" id="PTHR33596">
    <property type="entry name" value="COLD-REGULATED 413 PLASMA MEMBRANE PROTEIN 2"/>
    <property type="match status" value="1"/>
</dbReference>
<dbReference type="Pfam" id="PF05562">
    <property type="entry name" value="WCOR413"/>
    <property type="match status" value="1"/>
</dbReference>
<protein>
    <recommendedName>
        <fullName>Cold-regulated 413 plasma membrane protein 1</fullName>
        <shortName>AtCOR413-PM1</shortName>
    </recommendedName>
    <alternativeName>
        <fullName>WCOR413-like protein</fullName>
    </alternativeName>
</protein>
<sequence length="197" mass="21605">MPMKSLRNDHGTLKAMIGSDFNELTIAAKNLATHAFTLTGLGFGTSVLEWVASIAAIYLLVLDRTNWKTNMLTSLLIPYIFFSLPSLIFGIFRGEIGKWIAFVAVVVQLFFPKHAREYLELPVALVLLAVVAPNLIAGTFRDSWIGLAICLGIGCYLLQEHIRASGGFRNAFTKANGISNTVGIICLVVFPVWALIF</sequence>
<proteinExistence type="evidence at transcript level"/>
<name>CRPM1_ARATH</name>